<dbReference type="PIR" id="A31442">
    <property type="entry name" value="A31442"/>
</dbReference>
<dbReference type="SMR" id="P67890"/>
<dbReference type="GO" id="GO:0005576">
    <property type="term" value="C:extracellular region"/>
    <property type="evidence" value="ECO:0007669"/>
    <property type="project" value="UniProtKB-SubCell"/>
</dbReference>
<dbReference type="GO" id="GO:0004867">
    <property type="term" value="F:serine-type endopeptidase inhibitor activity"/>
    <property type="evidence" value="ECO:0007669"/>
    <property type="project" value="UniProtKB-KW"/>
</dbReference>
<dbReference type="CDD" id="cd00104">
    <property type="entry name" value="KAZAL_FS"/>
    <property type="match status" value="1"/>
</dbReference>
<dbReference type="FunFam" id="3.30.60.30:FF:000037">
    <property type="entry name" value="Ovomucoid"/>
    <property type="match status" value="1"/>
</dbReference>
<dbReference type="Gene3D" id="3.30.60.30">
    <property type="match status" value="1"/>
</dbReference>
<dbReference type="InterPro" id="IPR050159">
    <property type="entry name" value="Kazal-type_SerProtInhib"/>
</dbReference>
<dbReference type="InterPro" id="IPR002350">
    <property type="entry name" value="Kazal_dom"/>
</dbReference>
<dbReference type="InterPro" id="IPR036058">
    <property type="entry name" value="Kazal_dom_sf"/>
</dbReference>
<dbReference type="InterPro" id="IPR001239">
    <property type="entry name" value="Prot_inh_Kazal-m"/>
</dbReference>
<dbReference type="PANTHER" id="PTHR47499:SF1">
    <property type="entry name" value="SERINE PROTEASE INHIBITOR KAZAL-TYPE 7"/>
    <property type="match status" value="1"/>
</dbReference>
<dbReference type="PANTHER" id="PTHR47499">
    <property type="entry name" value="SERINE PROTEASE INHIBITOR KAZAL-TYPE 7 SPINK7"/>
    <property type="match status" value="1"/>
</dbReference>
<dbReference type="Pfam" id="PF00050">
    <property type="entry name" value="Kazal_1"/>
    <property type="match status" value="1"/>
</dbReference>
<dbReference type="PRINTS" id="PR00290">
    <property type="entry name" value="KAZALINHBTR"/>
</dbReference>
<dbReference type="SMART" id="SM00280">
    <property type="entry name" value="KAZAL"/>
    <property type="match status" value="1"/>
</dbReference>
<dbReference type="SUPFAM" id="SSF100895">
    <property type="entry name" value="Kazal-type serine protease inhibitors"/>
    <property type="match status" value="1"/>
</dbReference>
<dbReference type="PROSITE" id="PS00282">
    <property type="entry name" value="KAZAL_1"/>
    <property type="match status" value="1"/>
</dbReference>
<dbReference type="PROSITE" id="PS51465">
    <property type="entry name" value="KAZAL_2"/>
    <property type="match status" value="1"/>
</dbReference>
<organism>
    <name type="scientific">Dendrocygna arcuata</name>
    <name type="common">Wandering whistling-duck</name>
    <name type="synonym">Anas arcuata</name>
    <dbReference type="NCBI Taxonomy" id="8872"/>
    <lineage>
        <taxon>Eukaryota</taxon>
        <taxon>Metazoa</taxon>
        <taxon>Chordata</taxon>
        <taxon>Craniata</taxon>
        <taxon>Vertebrata</taxon>
        <taxon>Euteleostomi</taxon>
        <taxon>Archelosauria</taxon>
        <taxon>Archosauria</taxon>
        <taxon>Dinosauria</taxon>
        <taxon>Saurischia</taxon>
        <taxon>Theropoda</taxon>
        <taxon>Coelurosauria</taxon>
        <taxon>Aves</taxon>
        <taxon>Neognathae</taxon>
        <taxon>Galloanserae</taxon>
        <taxon>Anseriformes</taxon>
        <taxon>Anatidae</taxon>
        <taxon>Dendrocygninae</taxon>
        <taxon>Dendrocygna</taxon>
    </lineage>
</organism>
<protein>
    <recommendedName>
        <fullName>Ovomucoid</fullName>
    </recommendedName>
</protein>
<proteinExistence type="evidence at protein level"/>
<name>IOVO_DENAC</name>
<accession>P67890</accession>
<accession>P05568</accession>
<sequence length="54" mass="5798">VATVDCSDYPKPACTLEYMPLCGSDNKTYGNKCNFCNAVVDSNGTLTLSHFGKC</sequence>
<comment type="subcellular location">
    <subcellularLocation>
        <location>Secreted</location>
    </subcellularLocation>
</comment>
<comment type="domain">
    <text>Avian ovomucoid consists of three homologous, tandem Kazal family inhibitory domains.</text>
</comment>
<keyword id="KW-0903">Direct protein sequencing</keyword>
<keyword id="KW-1015">Disulfide bond</keyword>
<keyword id="KW-0325">Glycoprotein</keyword>
<keyword id="KW-0646">Protease inhibitor</keyword>
<keyword id="KW-0677">Repeat</keyword>
<keyword id="KW-0964">Secreted</keyword>
<keyword id="KW-0722">Serine protease inhibitor</keyword>
<evidence type="ECO:0000255" key="1">
    <source>
        <dbReference type="PROSITE-ProRule" id="PRU00798"/>
    </source>
</evidence>
<reference key="1">
    <citation type="journal article" date="1987" name="Biochemistry">
        <title>Ovomucoid third domains from 100 avian species: isolation, sequences, and hypervariability of enzyme-inhibitor contact residues.</title>
        <authorList>
            <person name="Laskowski M. Jr."/>
            <person name="Kato I."/>
            <person name="Ardelt W."/>
            <person name="Cook J."/>
            <person name="Denton A."/>
            <person name="Empie M.W."/>
            <person name="Kohr W.J."/>
            <person name="Park S.J."/>
            <person name="Parks K."/>
            <person name="Schatzley B.L."/>
            <person name="Schoenberger O.L."/>
            <person name="Tashiro M."/>
            <person name="Vichot G."/>
            <person name="Whatley H.E."/>
            <person name="Wieczorek A."/>
            <person name="Wieczorek M."/>
        </authorList>
    </citation>
    <scope>PROTEIN SEQUENCE</scope>
</reference>
<feature type="chain" id="PRO_0000073100" description="Ovomucoid">
    <location>
        <begin position="1" status="less than"/>
        <end position="54" status="greater than"/>
    </location>
</feature>
<feature type="domain" description="Kazal-like" evidence="1">
    <location>
        <begin position="4"/>
        <end position="54"/>
    </location>
</feature>
<feature type="site" description="Reactive bond 3">
    <location>
        <begin position="16"/>
        <end position="17"/>
    </location>
</feature>
<feature type="glycosylation site" description="N-linked (GlcNAc...) asparagine">
    <location>
        <position position="43"/>
    </location>
</feature>
<feature type="disulfide bond">
    <location>
        <begin position="6"/>
        <end position="36"/>
    </location>
</feature>
<feature type="disulfide bond">
    <location>
        <begin position="14"/>
        <end position="33"/>
    </location>
</feature>
<feature type="disulfide bond">
    <location>
        <begin position="22"/>
        <end position="54"/>
    </location>
</feature>
<feature type="non-terminal residue">
    <location>
        <position position="1"/>
    </location>
</feature>
<feature type="non-terminal residue">
    <location>
        <position position="54"/>
    </location>
</feature>